<feature type="chain" id="PRO_0000095823" description="Translation initiation factor IF-1">
    <location>
        <begin position="1"/>
        <end position="73"/>
    </location>
</feature>
<feature type="domain" description="S1-like" evidence="1">
    <location>
        <begin position="1"/>
        <end position="73"/>
    </location>
</feature>
<accession>P61691</accession>
<proteinExistence type="inferred from homology"/>
<comment type="function">
    <text evidence="1">One of the essential components for the initiation of protein synthesis. Stabilizes the binding of IF-2 and IF-3 on the 30S subunit to which N-formylmethionyl-tRNA(fMet) subsequently binds. Helps modulate mRNA selection, yielding the 30S pre-initiation complex (PIC). Upon addition of the 50S ribosomal subunit IF-1, IF-2 and IF-3 are released leaving the mature 70S translation initiation complex.</text>
</comment>
<comment type="subunit">
    <text evidence="1">Component of the 30S ribosomal translation pre-initiation complex which assembles on the 30S ribosome in the order IF-2 and IF-3, IF-1 and N-formylmethionyl-tRNA(fMet); mRNA recruitment can occur at any time during PIC assembly.</text>
</comment>
<comment type="subcellular location">
    <subcellularLocation>
        <location evidence="1">Cytoplasm</location>
    </subcellularLocation>
</comment>
<comment type="similarity">
    <text evidence="1">Belongs to the IF-1 family.</text>
</comment>
<name>IF1_MYCPA</name>
<protein>
    <recommendedName>
        <fullName evidence="1">Translation initiation factor IF-1</fullName>
    </recommendedName>
</protein>
<gene>
    <name evidence="1" type="primary">infA</name>
    <name type="ordered locus">MAP_4228</name>
</gene>
<evidence type="ECO:0000255" key="1">
    <source>
        <dbReference type="HAMAP-Rule" id="MF_00075"/>
    </source>
</evidence>
<organism>
    <name type="scientific">Mycolicibacterium paratuberculosis (strain ATCC BAA-968 / K-10)</name>
    <name type="common">Mycobacterium paratuberculosis</name>
    <dbReference type="NCBI Taxonomy" id="262316"/>
    <lineage>
        <taxon>Bacteria</taxon>
        <taxon>Bacillati</taxon>
        <taxon>Actinomycetota</taxon>
        <taxon>Actinomycetes</taxon>
        <taxon>Mycobacteriales</taxon>
        <taxon>Mycobacteriaceae</taxon>
        <taxon>Mycobacterium</taxon>
        <taxon>Mycobacterium avium complex (MAC)</taxon>
    </lineage>
</organism>
<dbReference type="EMBL" id="AE016958">
    <property type="protein sequence ID" value="AAS06778.1"/>
    <property type="molecule type" value="Genomic_DNA"/>
</dbReference>
<dbReference type="RefSeq" id="WP_003418601.1">
    <property type="nucleotide sequence ID" value="NZ_CP106873.1"/>
</dbReference>
<dbReference type="SMR" id="P61691"/>
<dbReference type="STRING" id="262316.MAP_4228"/>
<dbReference type="GeneID" id="98799387"/>
<dbReference type="KEGG" id="mpa:MAP_4228"/>
<dbReference type="eggNOG" id="COG0361">
    <property type="taxonomic scope" value="Bacteria"/>
</dbReference>
<dbReference type="HOGENOM" id="CLU_151267_1_0_11"/>
<dbReference type="Proteomes" id="UP000000580">
    <property type="component" value="Chromosome"/>
</dbReference>
<dbReference type="GO" id="GO:0005829">
    <property type="term" value="C:cytosol"/>
    <property type="evidence" value="ECO:0007669"/>
    <property type="project" value="TreeGrafter"/>
</dbReference>
<dbReference type="GO" id="GO:0043022">
    <property type="term" value="F:ribosome binding"/>
    <property type="evidence" value="ECO:0007669"/>
    <property type="project" value="UniProtKB-UniRule"/>
</dbReference>
<dbReference type="GO" id="GO:0019843">
    <property type="term" value="F:rRNA binding"/>
    <property type="evidence" value="ECO:0007669"/>
    <property type="project" value="UniProtKB-UniRule"/>
</dbReference>
<dbReference type="GO" id="GO:0003743">
    <property type="term" value="F:translation initiation factor activity"/>
    <property type="evidence" value="ECO:0007669"/>
    <property type="project" value="UniProtKB-UniRule"/>
</dbReference>
<dbReference type="CDD" id="cd04451">
    <property type="entry name" value="S1_IF1"/>
    <property type="match status" value="1"/>
</dbReference>
<dbReference type="FunFam" id="2.40.50.140:FF:000002">
    <property type="entry name" value="Translation initiation factor IF-1"/>
    <property type="match status" value="1"/>
</dbReference>
<dbReference type="Gene3D" id="2.40.50.140">
    <property type="entry name" value="Nucleic acid-binding proteins"/>
    <property type="match status" value="1"/>
</dbReference>
<dbReference type="HAMAP" id="MF_00075">
    <property type="entry name" value="IF_1"/>
    <property type="match status" value="1"/>
</dbReference>
<dbReference type="InterPro" id="IPR012340">
    <property type="entry name" value="NA-bd_OB-fold"/>
</dbReference>
<dbReference type="InterPro" id="IPR006196">
    <property type="entry name" value="RNA-binding_domain_S1_IF1"/>
</dbReference>
<dbReference type="InterPro" id="IPR004368">
    <property type="entry name" value="TIF_IF1"/>
</dbReference>
<dbReference type="NCBIfam" id="TIGR00008">
    <property type="entry name" value="infA"/>
    <property type="match status" value="1"/>
</dbReference>
<dbReference type="PANTHER" id="PTHR33370">
    <property type="entry name" value="TRANSLATION INITIATION FACTOR IF-1, CHLOROPLASTIC"/>
    <property type="match status" value="1"/>
</dbReference>
<dbReference type="PANTHER" id="PTHR33370:SF1">
    <property type="entry name" value="TRANSLATION INITIATION FACTOR IF-1, CHLOROPLASTIC"/>
    <property type="match status" value="1"/>
</dbReference>
<dbReference type="Pfam" id="PF01176">
    <property type="entry name" value="eIF-1a"/>
    <property type="match status" value="1"/>
</dbReference>
<dbReference type="SUPFAM" id="SSF50249">
    <property type="entry name" value="Nucleic acid-binding proteins"/>
    <property type="match status" value="1"/>
</dbReference>
<dbReference type="PROSITE" id="PS50832">
    <property type="entry name" value="S1_IF1_TYPE"/>
    <property type="match status" value="1"/>
</dbReference>
<reference key="1">
    <citation type="journal article" date="2005" name="Proc. Natl. Acad. Sci. U.S.A.">
        <title>The complete genome sequence of Mycobacterium avium subspecies paratuberculosis.</title>
        <authorList>
            <person name="Li L."/>
            <person name="Bannantine J.P."/>
            <person name="Zhang Q."/>
            <person name="Amonsin A."/>
            <person name="May B.J."/>
            <person name="Alt D."/>
            <person name="Banerji N."/>
            <person name="Kanjilal S."/>
            <person name="Kapur V."/>
        </authorList>
    </citation>
    <scope>NUCLEOTIDE SEQUENCE [LARGE SCALE GENOMIC DNA]</scope>
    <source>
        <strain>ATCC BAA-968 / K-10</strain>
    </source>
</reference>
<sequence>MAKKDGAIEVEGRVVEPLPNAMFRIELENGHKVLAHISGKMRQHYIRILPEDRVVVELSPYDLSRGRIVYRYK</sequence>
<keyword id="KW-0963">Cytoplasm</keyword>
<keyword id="KW-0396">Initiation factor</keyword>
<keyword id="KW-0648">Protein biosynthesis</keyword>
<keyword id="KW-1185">Reference proteome</keyword>
<keyword id="KW-0694">RNA-binding</keyword>
<keyword id="KW-0699">rRNA-binding</keyword>